<gene>
    <name type="primary">yafY</name>
    <name type="ordered locus">b0251</name>
    <name type="ordered locus">JW0240</name>
</gene>
<sequence>MKRKTLPLLALVATTLFLIACDDRSDDLKAISKFKDLTPPRFSDVVSHQDDVSEEWSQVDYLSGPTLQVLRTRQSPDGCEDGSYYYLVDMQEKTVQPLMNALCIADNIKLEYQEVTDPYTKEKYFEYAHDGKLMGQLLIPSNPDNQE</sequence>
<keyword id="KW-0997">Cell inner membrane</keyword>
<keyword id="KW-1003">Cell membrane</keyword>
<keyword id="KW-0449">Lipoprotein</keyword>
<keyword id="KW-0472">Membrane</keyword>
<keyword id="KW-0564">Palmitate</keyword>
<keyword id="KW-1185">Reference proteome</keyword>
<keyword id="KW-0732">Signal</keyword>
<protein>
    <recommendedName>
        <fullName>Lipoprotein YafY</fullName>
    </recommendedName>
</protein>
<comment type="function">
    <text evidence="2">When overproduced strongly induces degP through the activation of the two-component envelope stress response system CpxA/CpxR (PubMed:15252048).</text>
</comment>
<comment type="subcellular location">
    <subcellularLocation>
        <location evidence="1 2">Cell inner membrane</location>
        <topology evidence="1 4">Lipid-anchor</topology>
    </subcellularLocation>
</comment>
<comment type="similarity">
    <text evidence="3">To E.coli YfjS.</text>
</comment>
<comment type="sequence caution" evidence="3">
    <conflict type="erroneous initiation">
        <sequence resource="EMBL-CDS" id="AAB08670"/>
    </conflict>
    <text>Extended N-terminus.</text>
</comment>
<comment type="sequence caution" evidence="3">
    <conflict type="erroneous initiation">
        <sequence resource="EMBL-CDS" id="BAA77920"/>
    </conflict>
    <text>Extended N-terminus.</text>
</comment>
<organism>
    <name type="scientific">Escherichia coli (strain K12)</name>
    <dbReference type="NCBI Taxonomy" id="83333"/>
    <lineage>
        <taxon>Bacteria</taxon>
        <taxon>Pseudomonadati</taxon>
        <taxon>Pseudomonadota</taxon>
        <taxon>Gammaproteobacteria</taxon>
        <taxon>Enterobacterales</taxon>
        <taxon>Enterobacteriaceae</taxon>
        <taxon>Escherichia</taxon>
    </lineage>
</organism>
<dbReference type="EMBL" id="U70214">
    <property type="protein sequence ID" value="AAB08670.1"/>
    <property type="status" value="ALT_INIT"/>
    <property type="molecule type" value="Genomic_DNA"/>
</dbReference>
<dbReference type="EMBL" id="U00096">
    <property type="protein sequence ID" value="AAC73354.2"/>
    <property type="molecule type" value="Genomic_DNA"/>
</dbReference>
<dbReference type="EMBL" id="AP009048">
    <property type="protein sequence ID" value="BAA77920.1"/>
    <property type="status" value="ALT_INIT"/>
    <property type="molecule type" value="Genomic_DNA"/>
</dbReference>
<dbReference type="PIR" id="C64750">
    <property type="entry name" value="C64750"/>
</dbReference>
<dbReference type="RefSeq" id="NP_414785.4">
    <property type="nucleotide sequence ID" value="NC_000913.3"/>
</dbReference>
<dbReference type="RefSeq" id="WP_000824223.1">
    <property type="nucleotide sequence ID" value="NZ_LN832404.1"/>
</dbReference>
<dbReference type="BioGRID" id="4263170">
    <property type="interactions" value="3"/>
</dbReference>
<dbReference type="FunCoup" id="P77365">
    <property type="interactions" value="40"/>
</dbReference>
<dbReference type="IntAct" id="P77365">
    <property type="interactions" value="3"/>
</dbReference>
<dbReference type="STRING" id="511145.b0251"/>
<dbReference type="PaxDb" id="511145-b0251"/>
<dbReference type="EnsemblBacteria" id="AAC73354">
    <property type="protein sequence ID" value="AAC73354"/>
    <property type="gene ID" value="b0251"/>
</dbReference>
<dbReference type="GeneID" id="944934"/>
<dbReference type="KEGG" id="ecj:JW0240"/>
<dbReference type="KEGG" id="eco:b0251"/>
<dbReference type="KEGG" id="ecoc:C3026_01195"/>
<dbReference type="KEGG" id="ecoc:C3026_23930"/>
<dbReference type="PATRIC" id="fig|511145.12.peg.253"/>
<dbReference type="EchoBASE" id="EB3121"/>
<dbReference type="eggNOG" id="COG2378">
    <property type="taxonomic scope" value="Bacteria"/>
</dbReference>
<dbReference type="eggNOG" id="ENOG5032TZC">
    <property type="taxonomic scope" value="Bacteria"/>
</dbReference>
<dbReference type="HOGENOM" id="CLU_975685_0_0_6"/>
<dbReference type="InParanoid" id="P77365"/>
<dbReference type="OMA" id="PQYTVMK"/>
<dbReference type="OrthoDB" id="6521484at2"/>
<dbReference type="BioCyc" id="EcoCyc:G6126-MONOMER"/>
<dbReference type="PRO" id="PR:P77365"/>
<dbReference type="Proteomes" id="UP000000625">
    <property type="component" value="Chromosome"/>
</dbReference>
<dbReference type="GO" id="GO:0005886">
    <property type="term" value="C:plasma membrane"/>
    <property type="evidence" value="ECO:0000314"/>
    <property type="project" value="UniProtKB"/>
</dbReference>
<dbReference type="InterPro" id="IPR046809">
    <property type="entry name" value="YfjS_YafY_dom"/>
</dbReference>
<dbReference type="Pfam" id="PF20494">
    <property type="entry name" value="YfjS_YafY"/>
    <property type="match status" value="1"/>
</dbReference>
<dbReference type="PROSITE" id="PS51257">
    <property type="entry name" value="PROKAR_LIPOPROTEIN"/>
    <property type="match status" value="1"/>
</dbReference>
<proteinExistence type="evidence at protein level"/>
<reference key="1">
    <citation type="submission" date="1996-02" db="EMBL/GenBank/DDBJ databases">
        <title>Systematic sequencing of the Escherichia coli genome: analysis of the 4.0 - 6.0 min (189,987 - 281,416bp) region.</title>
        <authorList>
            <person name="Takemoto K."/>
            <person name="Mori H."/>
            <person name="Murayama N."/>
            <person name="Kataoka K."/>
            <person name="Yano M."/>
            <person name="Itoh T."/>
            <person name="Yamamoto Y."/>
            <person name="Inokuchi H."/>
            <person name="Miki T."/>
            <person name="Hatada E."/>
            <person name="Fukuda R."/>
            <person name="Ichihara S."/>
            <person name="Mizuno T."/>
            <person name="Makino K."/>
            <person name="Nakata A."/>
            <person name="Yura T."/>
            <person name="Sampei G."/>
            <person name="Mizobuchi K."/>
        </authorList>
    </citation>
    <scope>NUCLEOTIDE SEQUENCE [LARGE SCALE GENOMIC DNA]</scope>
    <source>
        <strain>K12 / W3110 / ATCC 27325 / DSM 5911</strain>
    </source>
</reference>
<reference key="2">
    <citation type="submission" date="1997-01" db="EMBL/GenBank/DDBJ databases">
        <title>Sequence of minutes 4-25 of Escherichia coli.</title>
        <authorList>
            <person name="Chung E."/>
            <person name="Allen E."/>
            <person name="Araujo R."/>
            <person name="Aparicio A.M."/>
            <person name="Davis K."/>
            <person name="Duncan M."/>
            <person name="Federspiel N."/>
            <person name="Hyman R."/>
            <person name="Kalman S."/>
            <person name="Komp C."/>
            <person name="Kurdi O."/>
            <person name="Lew H."/>
            <person name="Lin D."/>
            <person name="Namath A."/>
            <person name="Oefner P."/>
            <person name="Roberts D."/>
            <person name="Schramm S."/>
            <person name="Davis R.W."/>
        </authorList>
    </citation>
    <scope>NUCLEOTIDE SEQUENCE [LARGE SCALE GENOMIC DNA]</scope>
    <source>
        <strain>K12 / MG1655 / ATCC 47076</strain>
    </source>
</reference>
<reference key="3">
    <citation type="journal article" date="1997" name="Science">
        <title>The complete genome sequence of Escherichia coli K-12.</title>
        <authorList>
            <person name="Blattner F.R."/>
            <person name="Plunkett G. III"/>
            <person name="Bloch C.A."/>
            <person name="Perna N.T."/>
            <person name="Burland V."/>
            <person name="Riley M."/>
            <person name="Collado-Vides J."/>
            <person name="Glasner J.D."/>
            <person name="Rode C.K."/>
            <person name="Mayhew G.F."/>
            <person name="Gregor J."/>
            <person name="Davis N.W."/>
            <person name="Kirkpatrick H.A."/>
            <person name="Goeden M.A."/>
            <person name="Rose D.J."/>
            <person name="Mau B."/>
            <person name="Shao Y."/>
        </authorList>
    </citation>
    <scope>NUCLEOTIDE SEQUENCE [LARGE SCALE GENOMIC DNA]</scope>
    <source>
        <strain>K12 / MG1655 / ATCC 47076</strain>
    </source>
</reference>
<reference key="4">
    <citation type="journal article" date="2006" name="Mol. Syst. Biol.">
        <title>Highly accurate genome sequences of Escherichia coli K-12 strains MG1655 and W3110.</title>
        <authorList>
            <person name="Hayashi K."/>
            <person name="Morooka N."/>
            <person name="Yamamoto Y."/>
            <person name="Fujita K."/>
            <person name="Isono K."/>
            <person name="Choi S."/>
            <person name="Ohtsubo E."/>
            <person name="Baba T."/>
            <person name="Wanner B.L."/>
            <person name="Mori H."/>
            <person name="Horiuchi T."/>
        </authorList>
    </citation>
    <scope>NUCLEOTIDE SEQUENCE [LARGE SCALE GENOMIC DNA]</scope>
    <source>
        <strain>K12 / W3110 / ATCC 27325 / DSM 5911</strain>
    </source>
</reference>
<reference key="5">
    <citation type="journal article" date="2004" name="J. Biol. Chem.">
        <title>Effects of lipoprotein overproduction on the induction of DegP (HtrA) involved in quality control in the Escherichia coli periplasm.</title>
        <authorList>
            <person name="Miyadai H."/>
            <person name="Tanaka-Masuda K."/>
            <person name="Matsuyama S."/>
            <person name="Tokuda H."/>
        </authorList>
    </citation>
    <scope>FUNCTION IN DEGP EXPRESSION</scope>
    <scope>SUBCELLULAR LOCATION</scope>
    <scope>PALMITOYLATION AT CYS-21</scope>
    <scope>MUTAGENESIS OF CYS-21; 22-ASP-ASP-23; ASP-60; TYR-61 AND GLN-136</scope>
    <source>
        <strain>K12 / MC4100 / ATCC 35695 / DSM 6574</strain>
    </source>
</reference>
<name>YAFY_ECOLI</name>
<accession>P77365</accession>
<feature type="signal peptide" evidence="1">
    <location>
        <begin position="1"/>
        <end position="20"/>
    </location>
</feature>
<feature type="chain" id="PRO_0000050270" description="Lipoprotein YafY">
    <location>
        <begin position="21"/>
        <end position="147"/>
    </location>
</feature>
<feature type="lipid moiety-binding region" description="N-palmitoyl cysteine" evidence="1 4">
    <location>
        <position position="21"/>
    </location>
</feature>
<feature type="lipid moiety-binding region" description="S-diacylglycerol cysteine" evidence="1">
    <location>
        <position position="21"/>
    </location>
</feature>
<feature type="mutagenesis site" description="Very poorly expressed." evidence="2">
    <original>C</original>
    <variation>A</variation>
    <location>
        <position position="21"/>
    </location>
</feature>
<feature type="mutagenesis site" description="Still induces degP when overexpressed, remains in inner membrane." evidence="2">
    <original>DD</original>
    <variation>SS</variation>
    <location>
        <begin position="22"/>
        <end position="23"/>
    </location>
</feature>
<feature type="mutagenesis site" description="5-fold decrease in degP induction when overexpressed." evidence="2">
    <original>D</original>
    <variation>G</variation>
    <location>
        <position position="60"/>
    </location>
</feature>
<feature type="mutagenesis site" description="3-fold decrease in degP induction when overexpressed." evidence="2">
    <original>Y</original>
    <variation>F</variation>
    <location>
        <position position="61"/>
    </location>
</feature>
<feature type="mutagenesis site" description="2-fold decrease in degP induction when overexpressed." evidence="2">
    <original>Q</original>
    <variation>R</variation>
    <location>
        <position position="136"/>
    </location>
</feature>
<evidence type="ECO:0000255" key="1">
    <source>
        <dbReference type="PROSITE-ProRule" id="PRU00303"/>
    </source>
</evidence>
<evidence type="ECO:0000269" key="2">
    <source>
    </source>
</evidence>
<evidence type="ECO:0000305" key="3"/>
<evidence type="ECO:0000305" key="4">
    <source>
    </source>
</evidence>